<keyword id="KW-0028">Amino-acid biosynthesis</keyword>
<keyword id="KW-0067">ATP-binding</keyword>
<keyword id="KW-0963">Cytoplasm</keyword>
<keyword id="KW-0418">Kinase</keyword>
<keyword id="KW-0547">Nucleotide-binding</keyword>
<keyword id="KW-0791">Threonine biosynthesis</keyword>
<keyword id="KW-0808">Transferase</keyword>
<sequence length="310" mass="33624">MVKVYAPASSANMSVGFDVLGAAVTPVDGALLGDVVTVEAAETFSLNNLGRFADKLPSEPRENIVYQCWERFCQELGKQIPVAMTLEKNMPIGSGLGSSACSVVAALMAMNEHCGKPLNDTRLLALMGELEGRISGSIHYDNVAPCFLGGMQLMIEENDIISQQVPGFDEWLWVLAYPGIKVSTAEARAILPAQYRRQDCIAHGRHLAGFIHACYSRQPELAAKLMKDVIAEPYRERLLPGFRQARQAVAEIGAVASGISGSGPTLFALCDKPETAQRVADWLGKNYLQNQEGFVHICRLDTAGARVLEN</sequence>
<comment type="function">
    <text evidence="1">Catalyzes the ATP-dependent phosphorylation of L-homoserine to L-homoserine phosphate.</text>
</comment>
<comment type="catalytic activity">
    <reaction evidence="1">
        <text>L-homoserine + ATP = O-phospho-L-homoserine + ADP + H(+)</text>
        <dbReference type="Rhea" id="RHEA:13985"/>
        <dbReference type="ChEBI" id="CHEBI:15378"/>
        <dbReference type="ChEBI" id="CHEBI:30616"/>
        <dbReference type="ChEBI" id="CHEBI:57476"/>
        <dbReference type="ChEBI" id="CHEBI:57590"/>
        <dbReference type="ChEBI" id="CHEBI:456216"/>
        <dbReference type="EC" id="2.7.1.39"/>
    </reaction>
</comment>
<comment type="pathway">
    <text evidence="1">Amino-acid biosynthesis; L-threonine biosynthesis; L-threonine from L-aspartate: step 4/5.</text>
</comment>
<comment type="subcellular location">
    <subcellularLocation>
        <location evidence="1">Cytoplasm</location>
    </subcellularLocation>
</comment>
<comment type="similarity">
    <text evidence="1">Belongs to the GHMP kinase family. Homoserine kinase subfamily.</text>
</comment>
<protein>
    <recommendedName>
        <fullName evidence="1">Homoserine kinase</fullName>
        <shortName evidence="1">HK</shortName>
        <shortName evidence="1">HSK</shortName>
        <ecNumber evidence="1">2.7.1.39</ecNumber>
    </recommendedName>
</protein>
<gene>
    <name evidence="1" type="primary">thrB</name>
    <name type="ordered locus">ECDH10B_0003</name>
</gene>
<feature type="chain" id="PRO_1000122420" description="Homoserine kinase">
    <location>
        <begin position="1"/>
        <end position="310"/>
    </location>
</feature>
<feature type="binding site" evidence="1">
    <location>
        <begin position="91"/>
        <end position="101"/>
    </location>
    <ligand>
        <name>ATP</name>
        <dbReference type="ChEBI" id="CHEBI:30616"/>
    </ligand>
</feature>
<name>KHSE_ECODH</name>
<accession>B1XBC8</accession>
<dbReference type="EC" id="2.7.1.39" evidence="1"/>
<dbReference type="EMBL" id="CP000948">
    <property type="protein sequence ID" value="ACB01208.1"/>
    <property type="molecule type" value="Genomic_DNA"/>
</dbReference>
<dbReference type="RefSeq" id="WP_000241662.1">
    <property type="nucleotide sequence ID" value="NC_010473.1"/>
</dbReference>
<dbReference type="SMR" id="B1XBC8"/>
<dbReference type="KEGG" id="ecd:ECDH10B_0003"/>
<dbReference type="HOGENOM" id="CLU_041243_1_1_6"/>
<dbReference type="UniPathway" id="UPA00050">
    <property type="reaction ID" value="UER00064"/>
</dbReference>
<dbReference type="GO" id="GO:0005737">
    <property type="term" value="C:cytoplasm"/>
    <property type="evidence" value="ECO:0007669"/>
    <property type="project" value="UniProtKB-SubCell"/>
</dbReference>
<dbReference type="GO" id="GO:0005524">
    <property type="term" value="F:ATP binding"/>
    <property type="evidence" value="ECO:0007669"/>
    <property type="project" value="UniProtKB-UniRule"/>
</dbReference>
<dbReference type="GO" id="GO:0004413">
    <property type="term" value="F:homoserine kinase activity"/>
    <property type="evidence" value="ECO:0007669"/>
    <property type="project" value="UniProtKB-UniRule"/>
</dbReference>
<dbReference type="GO" id="GO:0009088">
    <property type="term" value="P:threonine biosynthetic process"/>
    <property type="evidence" value="ECO:0007669"/>
    <property type="project" value="UniProtKB-UniRule"/>
</dbReference>
<dbReference type="FunFam" id="3.30.230.10:FF:000020">
    <property type="entry name" value="Homoserine kinase"/>
    <property type="match status" value="1"/>
</dbReference>
<dbReference type="FunFam" id="3.30.70.890:FF:000002">
    <property type="entry name" value="Homoserine kinase"/>
    <property type="match status" value="1"/>
</dbReference>
<dbReference type="Gene3D" id="3.30.230.10">
    <property type="match status" value="1"/>
</dbReference>
<dbReference type="Gene3D" id="3.30.70.890">
    <property type="entry name" value="GHMP kinase, C-terminal domain"/>
    <property type="match status" value="1"/>
</dbReference>
<dbReference type="HAMAP" id="MF_00384">
    <property type="entry name" value="Homoser_kinase"/>
    <property type="match status" value="1"/>
</dbReference>
<dbReference type="InterPro" id="IPR013750">
    <property type="entry name" value="GHMP_kinase_C_dom"/>
</dbReference>
<dbReference type="InterPro" id="IPR036554">
    <property type="entry name" value="GHMP_kinase_C_sf"/>
</dbReference>
<dbReference type="InterPro" id="IPR006204">
    <property type="entry name" value="GHMP_kinase_N_dom"/>
</dbReference>
<dbReference type="InterPro" id="IPR006203">
    <property type="entry name" value="GHMP_knse_ATP-bd_CS"/>
</dbReference>
<dbReference type="InterPro" id="IPR000870">
    <property type="entry name" value="Homoserine_kinase"/>
</dbReference>
<dbReference type="InterPro" id="IPR020568">
    <property type="entry name" value="Ribosomal_Su5_D2-typ_SF"/>
</dbReference>
<dbReference type="InterPro" id="IPR014721">
    <property type="entry name" value="Ribsml_uS5_D2-typ_fold_subgr"/>
</dbReference>
<dbReference type="NCBIfam" id="NF002288">
    <property type="entry name" value="PRK01212.1-4"/>
    <property type="match status" value="1"/>
</dbReference>
<dbReference type="NCBIfam" id="TIGR00191">
    <property type="entry name" value="thrB"/>
    <property type="match status" value="1"/>
</dbReference>
<dbReference type="PANTHER" id="PTHR20861:SF1">
    <property type="entry name" value="HOMOSERINE KINASE"/>
    <property type="match status" value="1"/>
</dbReference>
<dbReference type="PANTHER" id="PTHR20861">
    <property type="entry name" value="HOMOSERINE/4-DIPHOSPHOCYTIDYL-2-C-METHYL-D-ERYTHRITOL KINASE"/>
    <property type="match status" value="1"/>
</dbReference>
<dbReference type="Pfam" id="PF08544">
    <property type="entry name" value="GHMP_kinases_C"/>
    <property type="match status" value="1"/>
</dbReference>
<dbReference type="Pfam" id="PF00288">
    <property type="entry name" value="GHMP_kinases_N"/>
    <property type="match status" value="1"/>
</dbReference>
<dbReference type="PIRSF" id="PIRSF000676">
    <property type="entry name" value="Homoser_kin"/>
    <property type="match status" value="1"/>
</dbReference>
<dbReference type="PRINTS" id="PR00958">
    <property type="entry name" value="HOMSERKINASE"/>
</dbReference>
<dbReference type="SUPFAM" id="SSF55060">
    <property type="entry name" value="GHMP Kinase, C-terminal domain"/>
    <property type="match status" value="1"/>
</dbReference>
<dbReference type="SUPFAM" id="SSF54211">
    <property type="entry name" value="Ribosomal protein S5 domain 2-like"/>
    <property type="match status" value="1"/>
</dbReference>
<dbReference type="PROSITE" id="PS00627">
    <property type="entry name" value="GHMP_KINASES_ATP"/>
    <property type="match status" value="1"/>
</dbReference>
<organism>
    <name type="scientific">Escherichia coli (strain K12 / DH10B)</name>
    <dbReference type="NCBI Taxonomy" id="316385"/>
    <lineage>
        <taxon>Bacteria</taxon>
        <taxon>Pseudomonadati</taxon>
        <taxon>Pseudomonadota</taxon>
        <taxon>Gammaproteobacteria</taxon>
        <taxon>Enterobacterales</taxon>
        <taxon>Enterobacteriaceae</taxon>
        <taxon>Escherichia</taxon>
    </lineage>
</organism>
<reference key="1">
    <citation type="journal article" date="2008" name="J. Bacteriol.">
        <title>The complete genome sequence of Escherichia coli DH10B: insights into the biology of a laboratory workhorse.</title>
        <authorList>
            <person name="Durfee T."/>
            <person name="Nelson R."/>
            <person name="Baldwin S."/>
            <person name="Plunkett G. III"/>
            <person name="Burland V."/>
            <person name="Mau B."/>
            <person name="Petrosino J.F."/>
            <person name="Qin X."/>
            <person name="Muzny D.M."/>
            <person name="Ayele M."/>
            <person name="Gibbs R.A."/>
            <person name="Csorgo B."/>
            <person name="Posfai G."/>
            <person name="Weinstock G.M."/>
            <person name="Blattner F.R."/>
        </authorList>
    </citation>
    <scope>NUCLEOTIDE SEQUENCE [LARGE SCALE GENOMIC DNA]</scope>
    <source>
        <strain>K12 / DH10B</strain>
    </source>
</reference>
<proteinExistence type="inferred from homology"/>
<evidence type="ECO:0000255" key="1">
    <source>
        <dbReference type="HAMAP-Rule" id="MF_00384"/>
    </source>
</evidence>